<sequence length="138" mass="14964">MIKPIPRISSRRNGRIGSRKTGRRIPKGIIHVQASFNNTIVTVTDVRGRVVSWSSAGTSGFKGAKRGTPFAAQSAAVNAIRTVVDQGMQRAEVMIKGPGPGRDAALRAIRRSGILLSFVRDITPMPHNGCRPPKKRRV</sequence>
<geneLocation type="chloroplast"/>
<name>RR11_LEMMI</name>
<gene>
    <name evidence="1" type="primary">rps11</name>
</gene>
<protein>
    <recommendedName>
        <fullName evidence="1">Small ribosomal subunit protein uS11c</fullName>
    </recommendedName>
    <alternativeName>
        <fullName evidence="3">30S ribosomal protein S11, chloroplastic</fullName>
    </alternativeName>
</protein>
<organism>
    <name type="scientific">Lemna minor</name>
    <name type="common">Common duckweed</name>
    <dbReference type="NCBI Taxonomy" id="4472"/>
    <lineage>
        <taxon>Eukaryota</taxon>
        <taxon>Viridiplantae</taxon>
        <taxon>Streptophyta</taxon>
        <taxon>Embryophyta</taxon>
        <taxon>Tracheophyta</taxon>
        <taxon>Spermatophyta</taxon>
        <taxon>Magnoliopsida</taxon>
        <taxon>Liliopsida</taxon>
        <taxon>Araceae</taxon>
        <taxon>Lemnoideae</taxon>
        <taxon>Lemna</taxon>
    </lineage>
</organism>
<comment type="subunit">
    <text evidence="1">Part of the 30S ribosomal subunit.</text>
</comment>
<comment type="subcellular location">
    <subcellularLocation>
        <location>Plastid</location>
        <location>Chloroplast</location>
    </subcellularLocation>
</comment>
<comment type="similarity">
    <text evidence="1">Belongs to the universal ribosomal protein uS11 family.</text>
</comment>
<reference key="1">
    <citation type="journal article" date="2008" name="J. Mol. Evol.">
        <title>Complete sequence of the Duckweed (Lemna minor) chloroplast genome: structural organization and phylogenetic relationships to other angiosperms.</title>
        <authorList>
            <person name="Mardanov A.V."/>
            <person name="Ravin N.V."/>
            <person name="Kuznetsov B.B."/>
            <person name="Samigullin T.H."/>
            <person name="Antonov A.S."/>
            <person name="Kolganova T.V."/>
            <person name="Skyabin K.G."/>
        </authorList>
    </citation>
    <scope>NUCLEOTIDE SEQUENCE [LARGE SCALE GENOMIC DNA]</scope>
</reference>
<proteinExistence type="inferred from homology"/>
<feature type="chain" id="PRO_0000364215" description="Small ribosomal subunit protein uS11c">
    <location>
        <begin position="1"/>
        <end position="138"/>
    </location>
</feature>
<feature type="region of interest" description="Disordered" evidence="2">
    <location>
        <begin position="1"/>
        <end position="24"/>
    </location>
</feature>
<feature type="compositionally biased region" description="Basic residues" evidence="2">
    <location>
        <begin position="9"/>
        <end position="24"/>
    </location>
</feature>
<evidence type="ECO:0000255" key="1">
    <source>
        <dbReference type="HAMAP-Rule" id="MF_01310"/>
    </source>
</evidence>
<evidence type="ECO:0000256" key="2">
    <source>
        <dbReference type="SAM" id="MobiDB-lite"/>
    </source>
</evidence>
<evidence type="ECO:0000305" key="3"/>
<keyword id="KW-0150">Chloroplast</keyword>
<keyword id="KW-0934">Plastid</keyword>
<keyword id="KW-0687">Ribonucleoprotein</keyword>
<keyword id="KW-0689">Ribosomal protein</keyword>
<keyword id="KW-0694">RNA-binding</keyword>
<keyword id="KW-0699">rRNA-binding</keyword>
<accession>A9L9C9</accession>
<dbReference type="EMBL" id="DQ400350">
    <property type="protein sequence ID" value="ABD48528.1"/>
    <property type="molecule type" value="Genomic_DNA"/>
</dbReference>
<dbReference type="RefSeq" id="YP_001595541.1">
    <property type="nucleotide sequence ID" value="NC_010109.1"/>
</dbReference>
<dbReference type="SMR" id="A9L9C9"/>
<dbReference type="GeneID" id="5787604"/>
<dbReference type="GO" id="GO:0009507">
    <property type="term" value="C:chloroplast"/>
    <property type="evidence" value="ECO:0007669"/>
    <property type="project" value="UniProtKB-SubCell"/>
</dbReference>
<dbReference type="GO" id="GO:1990904">
    <property type="term" value="C:ribonucleoprotein complex"/>
    <property type="evidence" value="ECO:0007669"/>
    <property type="project" value="UniProtKB-KW"/>
</dbReference>
<dbReference type="GO" id="GO:0005840">
    <property type="term" value="C:ribosome"/>
    <property type="evidence" value="ECO:0007669"/>
    <property type="project" value="UniProtKB-KW"/>
</dbReference>
<dbReference type="GO" id="GO:0019843">
    <property type="term" value="F:rRNA binding"/>
    <property type="evidence" value="ECO:0007669"/>
    <property type="project" value="UniProtKB-UniRule"/>
</dbReference>
<dbReference type="GO" id="GO:0003735">
    <property type="term" value="F:structural constituent of ribosome"/>
    <property type="evidence" value="ECO:0007669"/>
    <property type="project" value="InterPro"/>
</dbReference>
<dbReference type="GO" id="GO:0006412">
    <property type="term" value="P:translation"/>
    <property type="evidence" value="ECO:0007669"/>
    <property type="project" value="UniProtKB-UniRule"/>
</dbReference>
<dbReference type="FunFam" id="3.30.420.80:FF:000003">
    <property type="entry name" value="30S ribosomal protein S11, chloroplastic"/>
    <property type="match status" value="1"/>
</dbReference>
<dbReference type="Gene3D" id="3.30.420.80">
    <property type="entry name" value="Ribosomal protein S11"/>
    <property type="match status" value="1"/>
</dbReference>
<dbReference type="HAMAP" id="MF_01310">
    <property type="entry name" value="Ribosomal_uS11"/>
    <property type="match status" value="1"/>
</dbReference>
<dbReference type="InterPro" id="IPR001971">
    <property type="entry name" value="Ribosomal_uS11"/>
</dbReference>
<dbReference type="InterPro" id="IPR019981">
    <property type="entry name" value="Ribosomal_uS11_bac-type"/>
</dbReference>
<dbReference type="InterPro" id="IPR018102">
    <property type="entry name" value="Ribosomal_uS11_CS"/>
</dbReference>
<dbReference type="InterPro" id="IPR036967">
    <property type="entry name" value="Ribosomal_uS11_sf"/>
</dbReference>
<dbReference type="NCBIfam" id="NF003698">
    <property type="entry name" value="PRK05309.1"/>
    <property type="match status" value="1"/>
</dbReference>
<dbReference type="NCBIfam" id="TIGR03632">
    <property type="entry name" value="uS11_bact"/>
    <property type="match status" value="1"/>
</dbReference>
<dbReference type="PANTHER" id="PTHR11759">
    <property type="entry name" value="40S RIBOSOMAL PROTEIN S14/30S RIBOSOMAL PROTEIN S11"/>
    <property type="match status" value="1"/>
</dbReference>
<dbReference type="Pfam" id="PF00411">
    <property type="entry name" value="Ribosomal_S11"/>
    <property type="match status" value="1"/>
</dbReference>
<dbReference type="PIRSF" id="PIRSF002131">
    <property type="entry name" value="Ribosomal_S11"/>
    <property type="match status" value="1"/>
</dbReference>
<dbReference type="SUPFAM" id="SSF53137">
    <property type="entry name" value="Translational machinery components"/>
    <property type="match status" value="1"/>
</dbReference>
<dbReference type="PROSITE" id="PS00054">
    <property type="entry name" value="RIBOSOMAL_S11"/>
    <property type="match status" value="1"/>
</dbReference>